<gene>
    <name evidence="2" type="primary">XKR8</name>
    <name evidence="4" type="synonym">XRG8</name>
</gene>
<evidence type="ECO:0000250" key="1">
    <source>
        <dbReference type="UniProtKB" id="Q8C0T0"/>
    </source>
</evidence>
<evidence type="ECO:0000250" key="2">
    <source>
        <dbReference type="UniProtKB" id="Q9H6D3"/>
    </source>
</evidence>
<evidence type="ECO:0000255" key="3"/>
<evidence type="ECO:0000303" key="4">
    <source ref="1"/>
</evidence>
<evidence type="ECO:0000305" key="5"/>
<protein>
    <recommendedName>
        <fullName evidence="5">XK-related protein 8</fullName>
    </recommendedName>
    <component>
        <recommendedName>
            <fullName evidence="2">XK-related protein 8, processed form</fullName>
        </recommendedName>
    </component>
</protein>
<name>XKR8_PANTR</name>
<sequence>MPWSSRGALLRDLVLGVLGTAAFLLDLGTDLWAAVQYALGGRYLWAALVLALLGLASVALQLFSWLWLRADPAGLHGSQPPRRCLALLHLLQLGYLYRCVQELRQGLLVWQQEEPSEFDLAYADFLALDISMLRLFETFLETAPQLTLVLAIMLQSGRAEYYQWVGICTSFLGISWALLDYHRALRTCLPSRPLLGLGSSVIYFLWNLLLLWPRVLAVALFSALFPSYVALHFLGLWLVLLLWVWLQGTDFMPDPSSEWLYQVTVATILYFSWFNVAEGRTRGRAIIHFAFLLSDSILLVATWVTHSSWLPSGIPLQLWLPVGCGCFFLGLALRLVYYHWLHPSCCWKPDPDQVDGARSLLSPEGYQLPQNRRMTHLAQNFFPKAKDEAALPVKG</sequence>
<reference key="1">
    <citation type="submission" date="2004-07" db="EMBL/GenBank/DDBJ databases">
        <title>A superfamily of XK-related genes (XRG) widely expressed in vertebrates and invertebrates.</title>
        <authorList>
            <person name="Huang C.-H."/>
            <person name="Chen Y."/>
        </authorList>
    </citation>
    <scope>NUCLEOTIDE SEQUENCE [MRNA]</scope>
</reference>
<accession>Q49LS0</accession>
<organism>
    <name type="scientific">Pan troglodytes</name>
    <name type="common">Chimpanzee</name>
    <dbReference type="NCBI Taxonomy" id="9598"/>
    <lineage>
        <taxon>Eukaryota</taxon>
        <taxon>Metazoa</taxon>
        <taxon>Chordata</taxon>
        <taxon>Craniata</taxon>
        <taxon>Vertebrata</taxon>
        <taxon>Euteleostomi</taxon>
        <taxon>Mammalia</taxon>
        <taxon>Eutheria</taxon>
        <taxon>Euarchontoglires</taxon>
        <taxon>Primates</taxon>
        <taxon>Haplorrhini</taxon>
        <taxon>Catarrhini</taxon>
        <taxon>Hominidae</taxon>
        <taxon>Pan</taxon>
    </lineage>
</organism>
<dbReference type="EMBL" id="AY702911">
    <property type="protein sequence ID" value="AAV83784.1"/>
    <property type="molecule type" value="mRNA"/>
</dbReference>
<dbReference type="RefSeq" id="NP_001028209.1">
    <property type="nucleotide sequence ID" value="NM_001033037.1"/>
</dbReference>
<dbReference type="SMR" id="Q49LS0"/>
<dbReference type="FunCoup" id="Q49LS0">
    <property type="interactions" value="592"/>
</dbReference>
<dbReference type="STRING" id="9598.ENSPTRP00000000737"/>
<dbReference type="PaxDb" id="9598-ENSPTRP00000054182"/>
<dbReference type="GeneID" id="613218"/>
<dbReference type="KEGG" id="ptr:613218"/>
<dbReference type="CTD" id="55113"/>
<dbReference type="eggNOG" id="KOG4790">
    <property type="taxonomic scope" value="Eukaryota"/>
</dbReference>
<dbReference type="InParanoid" id="Q49LS0"/>
<dbReference type="Proteomes" id="UP000002277">
    <property type="component" value="Unplaced"/>
</dbReference>
<dbReference type="GO" id="GO:0048471">
    <property type="term" value="C:perinuclear region of cytoplasm"/>
    <property type="evidence" value="ECO:0007669"/>
    <property type="project" value="UniProtKB-SubCell"/>
</dbReference>
<dbReference type="GO" id="GO:0005886">
    <property type="term" value="C:plasma membrane"/>
    <property type="evidence" value="ECO:0000250"/>
    <property type="project" value="UniProtKB"/>
</dbReference>
<dbReference type="GO" id="GO:0017128">
    <property type="term" value="F:phospholipid scramblase activity"/>
    <property type="evidence" value="ECO:0000250"/>
    <property type="project" value="UniProtKB"/>
</dbReference>
<dbReference type="GO" id="GO:1902742">
    <property type="term" value="P:apoptotic process involved in development"/>
    <property type="evidence" value="ECO:0000318"/>
    <property type="project" value="GO_Central"/>
</dbReference>
<dbReference type="GO" id="GO:0043652">
    <property type="term" value="P:engulfment of apoptotic cell"/>
    <property type="evidence" value="ECO:0000250"/>
    <property type="project" value="UniProtKB"/>
</dbReference>
<dbReference type="GO" id="GO:0097350">
    <property type="term" value="P:neutrophil clearance"/>
    <property type="evidence" value="ECO:0000250"/>
    <property type="project" value="UniProtKB"/>
</dbReference>
<dbReference type="GO" id="GO:0070782">
    <property type="term" value="P:phosphatidylserine exposure on apoptotic cell surface"/>
    <property type="evidence" value="ECO:0000250"/>
    <property type="project" value="UniProtKB"/>
</dbReference>
<dbReference type="GO" id="GO:0045663">
    <property type="term" value="P:positive regulation of myoblast differentiation"/>
    <property type="evidence" value="ECO:0000250"/>
    <property type="project" value="UniProtKB"/>
</dbReference>
<dbReference type="InterPro" id="IPR018629">
    <property type="entry name" value="XK-rel"/>
</dbReference>
<dbReference type="InterPro" id="IPR050895">
    <property type="entry name" value="XK-related_scramblase"/>
</dbReference>
<dbReference type="PANTHER" id="PTHR16024">
    <property type="entry name" value="XK-RELATED PROTEIN"/>
    <property type="match status" value="1"/>
</dbReference>
<dbReference type="PANTHER" id="PTHR16024:SF8">
    <property type="entry name" value="XK-RELATED PROTEIN 8"/>
    <property type="match status" value="1"/>
</dbReference>
<dbReference type="Pfam" id="PF09815">
    <property type="entry name" value="XK-related"/>
    <property type="match status" value="1"/>
</dbReference>
<keyword id="KW-0053">Apoptosis</keyword>
<keyword id="KW-1003">Cell membrane</keyword>
<keyword id="KW-0963">Cytoplasm</keyword>
<keyword id="KW-0472">Membrane</keyword>
<keyword id="KW-0597">Phosphoprotein</keyword>
<keyword id="KW-1185">Reference proteome</keyword>
<keyword id="KW-0812">Transmembrane</keyword>
<keyword id="KW-1133">Transmembrane helix</keyword>
<feature type="chain" id="PRO_0000190793" description="XK-related protein 8">
    <location>
        <begin position="1"/>
        <end position="395"/>
    </location>
</feature>
<feature type="chain" id="PRO_0000423986" description="XK-related protein 8, processed form" evidence="2">
    <location>
        <begin position="1"/>
        <end position="355"/>
    </location>
</feature>
<feature type="topological domain" description="Cytoplasmic" evidence="3">
    <location>
        <begin position="1"/>
        <end position="12"/>
    </location>
</feature>
<feature type="transmembrane region" description="Helical" evidence="3">
    <location>
        <begin position="13"/>
        <end position="33"/>
    </location>
</feature>
<feature type="topological domain" description="Extracellular" evidence="3">
    <location>
        <begin position="34"/>
        <end position="47"/>
    </location>
</feature>
<feature type="transmembrane region" description="Helical" evidence="3">
    <location>
        <begin position="48"/>
        <end position="68"/>
    </location>
</feature>
<feature type="topological domain" description="Cytoplasmic" evidence="3">
    <location>
        <begin position="69"/>
        <end position="158"/>
    </location>
</feature>
<feature type="transmembrane region" description="Helical" evidence="3">
    <location>
        <begin position="159"/>
        <end position="179"/>
    </location>
</feature>
<feature type="topological domain" description="Extracellular" evidence="3">
    <location>
        <begin position="180"/>
        <end position="200"/>
    </location>
</feature>
<feature type="transmembrane region" description="Helical" evidence="3">
    <location>
        <begin position="201"/>
        <end position="221"/>
    </location>
</feature>
<feature type="topological domain" description="Cytoplasmic" evidence="3">
    <location>
        <begin position="222"/>
        <end position="223"/>
    </location>
</feature>
<feature type="transmembrane region" description="Helical" evidence="3">
    <location>
        <begin position="224"/>
        <end position="244"/>
    </location>
</feature>
<feature type="topological domain" description="Extracellular" evidence="3">
    <location>
        <begin position="245"/>
        <end position="258"/>
    </location>
</feature>
<feature type="transmembrane region" description="Helical" evidence="3">
    <location>
        <begin position="259"/>
        <end position="279"/>
    </location>
</feature>
<feature type="topological domain" description="Cytoplasmic" evidence="3">
    <location>
        <begin position="280"/>
        <end position="284"/>
    </location>
</feature>
<feature type="transmembrane region" description="Helical" evidence="3">
    <location>
        <begin position="285"/>
        <end position="305"/>
    </location>
</feature>
<feature type="topological domain" description="Extracellular" evidence="3">
    <location>
        <begin position="306"/>
        <end position="312"/>
    </location>
</feature>
<feature type="transmembrane region" description="Helical" evidence="3">
    <location>
        <begin position="313"/>
        <end position="333"/>
    </location>
</feature>
<feature type="topological domain" description="Cytoplasmic" evidence="3">
    <location>
        <begin position="334"/>
        <end position="395"/>
    </location>
</feature>
<feature type="site" description="Cleavage; by caspase-3" evidence="2">
    <location>
        <begin position="355"/>
        <end position="356"/>
    </location>
</feature>
<feature type="modified residue" description="Phosphoserine" evidence="1">
    <location>
        <position position="362"/>
    </location>
</feature>
<feature type="modified residue" description="Phosphothreonine" evidence="1">
    <location>
        <position position="375"/>
    </location>
</feature>
<comment type="function">
    <molecule>XK-related protein 8, processed form</molecule>
    <text evidence="1 2">Phospholipid scramblase that promotes phosphatidylserine exposure on apoptotic cell surface. Phosphatidylserine is a specific marker only present at the surface of apoptotic cells and acts as a specific signal for engulfment. Required for the clearance of apoptotic cells, such as engulfment of apoptotic germ cells by Sertoli cells, clearance of senescent neutrophils or regulation of bipolar cell numbers in the retina (By similarity). Has no effect on calcium-induced exposure of phosphatidylserine (By similarity). Promotes myoblast differentiation and survival (By similarity).</text>
</comment>
<comment type="catalytic activity">
    <molecule>XK-related protein 8, processed form</molecule>
    <reaction evidence="1">
        <text>a 1,2-diacyl-sn-glycero-3-phospho-L-serine(in) = a 1,2-diacyl-sn-glycero-3-phospho-L-serine(out)</text>
        <dbReference type="Rhea" id="RHEA:38663"/>
        <dbReference type="ChEBI" id="CHEBI:57262"/>
    </reaction>
</comment>
<comment type="activity regulation">
    <text evidence="2">Activated upon caspase cleavage to generate the XK-related protein 8, processed form. Does not act prior the onset of apoptosis.</text>
</comment>
<comment type="subunit">
    <text evidence="1">Interacts with BSG and NPTN; which act as chaperones to localize XKR8 at the cell membrane.</text>
</comment>
<comment type="subunit">
    <molecule>XK-related protein 8, processed form</molecule>
    <text evidence="2">Homodimer.</text>
</comment>
<comment type="subcellular location">
    <subcellularLocation>
        <location evidence="1">Cell membrane</location>
        <topology evidence="3">Multi-pass membrane protein</topology>
    </subcellularLocation>
    <subcellularLocation>
        <location evidence="2">Cytoplasm</location>
        <location evidence="2">Perinuclear region</location>
    </subcellularLocation>
</comment>
<comment type="PTM">
    <text evidence="1">Undergoes proteolytic processing by caspase-3 (CASP3), leading to its activation.</text>
</comment>
<comment type="PTM">
    <text evidence="1">Phosphorylation at Thr-375 activates the phospholipid scramblase activity.</text>
</comment>
<comment type="similarity">
    <text evidence="5">Belongs to the XK family.</text>
</comment>
<proteinExistence type="evidence at transcript level"/>